<accession>Q72IH2</accession>
<organism>
    <name type="scientific">Thermus thermophilus (strain ATCC BAA-163 / DSM 7039 / HB27)</name>
    <dbReference type="NCBI Taxonomy" id="262724"/>
    <lineage>
        <taxon>Bacteria</taxon>
        <taxon>Thermotogati</taxon>
        <taxon>Deinococcota</taxon>
        <taxon>Deinococci</taxon>
        <taxon>Thermales</taxon>
        <taxon>Thermaceae</taxon>
        <taxon>Thermus</taxon>
    </lineage>
</organism>
<reference key="1">
    <citation type="journal article" date="2004" name="Nat. Biotechnol.">
        <title>The genome sequence of the extreme thermophile Thermus thermophilus.</title>
        <authorList>
            <person name="Henne A."/>
            <person name="Brueggemann H."/>
            <person name="Raasch C."/>
            <person name="Wiezer A."/>
            <person name="Hartsch T."/>
            <person name="Liesegang H."/>
            <person name="Johann A."/>
            <person name="Lienard T."/>
            <person name="Gohl O."/>
            <person name="Martinez-Arias R."/>
            <person name="Jacobi C."/>
            <person name="Starkuviene V."/>
            <person name="Schlenczeck S."/>
            <person name="Dencker S."/>
            <person name="Huber R."/>
            <person name="Klenk H.-P."/>
            <person name="Kramer W."/>
            <person name="Merkl R."/>
            <person name="Gottschalk G."/>
            <person name="Fritz H.-J."/>
        </authorList>
    </citation>
    <scope>NUCLEOTIDE SEQUENCE [LARGE SCALE GENOMIC DNA]</scope>
    <source>
        <strain>ATCC BAA-163 / DSM 7039 / HB27</strain>
    </source>
</reference>
<keyword id="KW-0028">Amino-acid biosynthesis</keyword>
<keyword id="KW-0963">Cytoplasm</keyword>
<keyword id="KW-0554">One-carbon metabolism</keyword>
<keyword id="KW-0663">Pyridoxal phosphate</keyword>
<keyword id="KW-0808">Transferase</keyword>
<dbReference type="EC" id="2.1.2.1" evidence="1"/>
<dbReference type="EMBL" id="AE017221">
    <property type="protein sequence ID" value="AAS81502.1"/>
    <property type="status" value="ALT_INIT"/>
    <property type="molecule type" value="Genomic_DNA"/>
</dbReference>
<dbReference type="RefSeq" id="WP_041443518.1">
    <property type="nucleotide sequence ID" value="NC_005835.1"/>
</dbReference>
<dbReference type="SMR" id="Q72IH2"/>
<dbReference type="KEGG" id="tth:TT_C1160"/>
<dbReference type="eggNOG" id="COG0112">
    <property type="taxonomic scope" value="Bacteria"/>
</dbReference>
<dbReference type="HOGENOM" id="CLU_022477_2_1_0"/>
<dbReference type="OrthoDB" id="9803846at2"/>
<dbReference type="UniPathway" id="UPA00193"/>
<dbReference type="UniPathway" id="UPA00288">
    <property type="reaction ID" value="UER01023"/>
</dbReference>
<dbReference type="Proteomes" id="UP000000592">
    <property type="component" value="Chromosome"/>
</dbReference>
<dbReference type="GO" id="GO:0005829">
    <property type="term" value="C:cytosol"/>
    <property type="evidence" value="ECO:0007669"/>
    <property type="project" value="TreeGrafter"/>
</dbReference>
<dbReference type="GO" id="GO:0004372">
    <property type="term" value="F:glycine hydroxymethyltransferase activity"/>
    <property type="evidence" value="ECO:0007669"/>
    <property type="project" value="UniProtKB-UniRule"/>
</dbReference>
<dbReference type="GO" id="GO:0030170">
    <property type="term" value="F:pyridoxal phosphate binding"/>
    <property type="evidence" value="ECO:0007669"/>
    <property type="project" value="UniProtKB-UniRule"/>
</dbReference>
<dbReference type="GO" id="GO:0019264">
    <property type="term" value="P:glycine biosynthetic process from serine"/>
    <property type="evidence" value="ECO:0007669"/>
    <property type="project" value="UniProtKB-UniRule"/>
</dbReference>
<dbReference type="GO" id="GO:0035999">
    <property type="term" value="P:tetrahydrofolate interconversion"/>
    <property type="evidence" value="ECO:0007669"/>
    <property type="project" value="UniProtKB-UniRule"/>
</dbReference>
<dbReference type="CDD" id="cd00378">
    <property type="entry name" value="SHMT"/>
    <property type="match status" value="1"/>
</dbReference>
<dbReference type="FunFam" id="3.40.640.10:FF:000001">
    <property type="entry name" value="Serine hydroxymethyltransferase"/>
    <property type="match status" value="1"/>
</dbReference>
<dbReference type="Gene3D" id="3.90.1150.10">
    <property type="entry name" value="Aspartate Aminotransferase, domain 1"/>
    <property type="match status" value="1"/>
</dbReference>
<dbReference type="Gene3D" id="3.40.640.10">
    <property type="entry name" value="Type I PLP-dependent aspartate aminotransferase-like (Major domain)"/>
    <property type="match status" value="1"/>
</dbReference>
<dbReference type="HAMAP" id="MF_00051">
    <property type="entry name" value="SHMT"/>
    <property type="match status" value="1"/>
</dbReference>
<dbReference type="InterPro" id="IPR015424">
    <property type="entry name" value="PyrdxlP-dep_Trfase"/>
</dbReference>
<dbReference type="InterPro" id="IPR015421">
    <property type="entry name" value="PyrdxlP-dep_Trfase_major"/>
</dbReference>
<dbReference type="InterPro" id="IPR015422">
    <property type="entry name" value="PyrdxlP-dep_Trfase_small"/>
</dbReference>
<dbReference type="InterPro" id="IPR001085">
    <property type="entry name" value="Ser_HO-MeTrfase"/>
</dbReference>
<dbReference type="InterPro" id="IPR049943">
    <property type="entry name" value="Ser_HO-MeTrfase-like"/>
</dbReference>
<dbReference type="InterPro" id="IPR019798">
    <property type="entry name" value="Ser_HO-MeTrfase_PLP_BS"/>
</dbReference>
<dbReference type="InterPro" id="IPR039429">
    <property type="entry name" value="SHMT-like_dom"/>
</dbReference>
<dbReference type="NCBIfam" id="NF000586">
    <property type="entry name" value="PRK00011.1"/>
    <property type="match status" value="1"/>
</dbReference>
<dbReference type="PANTHER" id="PTHR11680">
    <property type="entry name" value="SERINE HYDROXYMETHYLTRANSFERASE"/>
    <property type="match status" value="1"/>
</dbReference>
<dbReference type="PANTHER" id="PTHR11680:SF35">
    <property type="entry name" value="SERINE HYDROXYMETHYLTRANSFERASE 1"/>
    <property type="match status" value="1"/>
</dbReference>
<dbReference type="Pfam" id="PF00464">
    <property type="entry name" value="SHMT"/>
    <property type="match status" value="1"/>
</dbReference>
<dbReference type="PIRSF" id="PIRSF000412">
    <property type="entry name" value="SHMT"/>
    <property type="match status" value="1"/>
</dbReference>
<dbReference type="SUPFAM" id="SSF53383">
    <property type="entry name" value="PLP-dependent transferases"/>
    <property type="match status" value="1"/>
</dbReference>
<dbReference type="PROSITE" id="PS00096">
    <property type="entry name" value="SHMT"/>
    <property type="match status" value="1"/>
</dbReference>
<gene>
    <name evidence="1" type="primary">glyA</name>
    <name type="ordered locus">TT_C1160</name>
</gene>
<proteinExistence type="inferred from homology"/>
<feature type="chain" id="PRO_0000113685" description="Serine hydroxymethyltransferase">
    <location>
        <begin position="1"/>
        <end position="407"/>
    </location>
</feature>
<feature type="binding site" evidence="1">
    <location>
        <position position="117"/>
    </location>
    <ligand>
        <name>(6S)-5,6,7,8-tetrahydrofolate</name>
        <dbReference type="ChEBI" id="CHEBI:57453"/>
    </ligand>
</feature>
<feature type="binding site" evidence="1">
    <location>
        <begin position="121"/>
        <end position="123"/>
    </location>
    <ligand>
        <name>(6S)-5,6,7,8-tetrahydrofolate</name>
        <dbReference type="ChEBI" id="CHEBI:57453"/>
    </ligand>
</feature>
<feature type="binding site" evidence="1">
    <location>
        <position position="242"/>
    </location>
    <ligand>
        <name>(6S)-5,6,7,8-tetrahydrofolate</name>
        <dbReference type="ChEBI" id="CHEBI:57453"/>
    </ligand>
</feature>
<feature type="site" description="Plays an important role in substrate specificity" evidence="1">
    <location>
        <position position="225"/>
    </location>
</feature>
<feature type="modified residue" description="N6-(pyridoxal phosphate)lysine" evidence="1">
    <location>
        <position position="226"/>
    </location>
</feature>
<evidence type="ECO:0000255" key="1">
    <source>
        <dbReference type="HAMAP-Rule" id="MF_00051"/>
    </source>
</evidence>
<evidence type="ECO:0000305" key="2"/>
<protein>
    <recommendedName>
        <fullName evidence="1">Serine hydroxymethyltransferase</fullName>
        <shortName evidence="1">SHMT</shortName>
        <shortName evidence="1">Serine methylase</shortName>
        <ecNumber evidence="1">2.1.2.1</ecNumber>
    </recommendedName>
</protein>
<name>GLYA_THET2</name>
<comment type="function">
    <text evidence="1">Catalyzes the reversible interconversion of serine and glycine with tetrahydrofolate (THF) serving as the one-carbon carrier. This reaction serves as the major source of one-carbon groups required for the biosynthesis of purines, thymidylate, methionine, and other important biomolecules. Also exhibits THF-independent aldolase activity toward beta-hydroxyamino acids, producing glycine and aldehydes, via a retro-aldol mechanism.</text>
</comment>
<comment type="catalytic activity">
    <reaction evidence="1">
        <text>(6R)-5,10-methylene-5,6,7,8-tetrahydrofolate + glycine + H2O = (6S)-5,6,7,8-tetrahydrofolate + L-serine</text>
        <dbReference type="Rhea" id="RHEA:15481"/>
        <dbReference type="ChEBI" id="CHEBI:15377"/>
        <dbReference type="ChEBI" id="CHEBI:15636"/>
        <dbReference type="ChEBI" id="CHEBI:33384"/>
        <dbReference type="ChEBI" id="CHEBI:57305"/>
        <dbReference type="ChEBI" id="CHEBI:57453"/>
        <dbReference type="EC" id="2.1.2.1"/>
    </reaction>
</comment>
<comment type="cofactor">
    <cofactor evidence="1">
        <name>pyridoxal 5'-phosphate</name>
        <dbReference type="ChEBI" id="CHEBI:597326"/>
    </cofactor>
</comment>
<comment type="pathway">
    <text evidence="1">One-carbon metabolism; tetrahydrofolate interconversion.</text>
</comment>
<comment type="pathway">
    <text evidence="1">Amino-acid biosynthesis; glycine biosynthesis; glycine from L-serine: step 1/1.</text>
</comment>
<comment type="subunit">
    <text evidence="1">Homodimer.</text>
</comment>
<comment type="subcellular location">
    <subcellularLocation>
        <location evidence="1">Cytoplasm</location>
    </subcellularLocation>
</comment>
<comment type="similarity">
    <text evidence="1">Belongs to the SHMT family.</text>
</comment>
<comment type="sequence caution" evidence="2">
    <conflict type="erroneous initiation">
        <sequence resource="EMBL-CDS" id="AAS81502"/>
    </conflict>
</comment>
<sequence length="407" mass="44533">MVSTLKRDEALFELIALEEKRQREGLELIASENFVSKQVREAVGSVLTNKYAEGYPGARYYGGCEAIDRVESLAIERAKALFGAAWANVQPHSGSQANMAVYMALMEPGDTLMGMDLAAGGHLTHGSRVNFSGKLYKVVSYGVRPDTELIDLEEVRRLALEHRPKVIVAGASAYPRFWDFKAFREIADEVGAYLVVDMAHFAGLVAAGLHPNPLPYAHVVTSTTHKTLRGPRGGLILSNDPELGKRIDKLIFPGIQGGPLEHVIAGKAVAFFEALQPEFKEYSRLVVENAKRLAEALARRGYRIVTGGTDNHLFLVDLRPKGLTGKEAEERLDAVGITVNKNAIPFDPKPPRVTSGIRIGTPAITTRGFTPEEMPLVAELIDRALLEGPSEALREEVRRLALAHPMP</sequence>